<accession>A1USE7</accession>
<gene>
    <name evidence="1" type="primary">lpxA</name>
    <name type="ordered locus">BARBAKC583_0592</name>
</gene>
<protein>
    <recommendedName>
        <fullName evidence="1">Acyl-[acyl-carrier-protein]--UDP-N-acetylglucosamine O-acyltransferase</fullName>
        <shortName evidence="1">UDP-N-acetylglucosamine acyltransferase</shortName>
        <ecNumber evidence="1">2.3.1.129</ecNumber>
    </recommendedName>
</protein>
<comment type="function">
    <text evidence="1">Involved in the biosynthesis of lipid A, a phosphorylated glycolipid that anchors the lipopolysaccharide to the outer membrane of the cell.</text>
</comment>
<comment type="catalytic activity">
    <reaction evidence="1">
        <text>a (3R)-hydroxyacyl-[ACP] + UDP-N-acetyl-alpha-D-glucosamine = a UDP-3-O-[(3R)-3-hydroxyacyl]-N-acetyl-alpha-D-glucosamine + holo-[ACP]</text>
        <dbReference type="Rhea" id="RHEA:67812"/>
        <dbReference type="Rhea" id="RHEA-COMP:9685"/>
        <dbReference type="Rhea" id="RHEA-COMP:9945"/>
        <dbReference type="ChEBI" id="CHEBI:57705"/>
        <dbReference type="ChEBI" id="CHEBI:64479"/>
        <dbReference type="ChEBI" id="CHEBI:78827"/>
        <dbReference type="ChEBI" id="CHEBI:173225"/>
        <dbReference type="EC" id="2.3.1.129"/>
    </reaction>
</comment>
<comment type="pathway">
    <text evidence="1">Glycolipid biosynthesis; lipid IV(A) biosynthesis; lipid IV(A) from (3R)-3-hydroxytetradecanoyl-[acyl-carrier-protein] and UDP-N-acetyl-alpha-D-glucosamine: step 1/6.</text>
</comment>
<comment type="subunit">
    <text evidence="1">Homotrimer.</text>
</comment>
<comment type="subcellular location">
    <subcellularLocation>
        <location evidence="1">Cytoplasm</location>
    </subcellularLocation>
</comment>
<comment type="similarity">
    <text evidence="1">Belongs to the transferase hexapeptide repeat family. LpxA subfamily.</text>
</comment>
<evidence type="ECO:0000255" key="1">
    <source>
        <dbReference type="HAMAP-Rule" id="MF_00387"/>
    </source>
</evidence>
<proteinExistence type="inferred from homology"/>
<sequence length="274" mass="29517">MSGTKIHPTAFVEEGAQLGENVSIGPFCHIGPQAVIGDGCCLMSHVVIMGNTILGANSKIFPHAILGGDPQNNKHKGGHTSLFIGKNCIIREGVTMHRGSDTCAGKTVIGDNCQFFSYAHVAHDCHVGHHVTFANNAMIGGHVTVGDYVIIGGGSAVHQFVRIGHHAFIGGVSALVGDLIPYGMAVGVQAKLAGLNIIGMKRAGLERKEIRSLRHAVSMLFDHSKPLRERVYDVFSFYSTSQSVVDIVNFIQEKGKRFYCTPRFENDTMCSNKD</sequence>
<dbReference type="EC" id="2.3.1.129" evidence="1"/>
<dbReference type="EMBL" id="CP000524">
    <property type="protein sequence ID" value="ABM44748.1"/>
    <property type="molecule type" value="Genomic_DNA"/>
</dbReference>
<dbReference type="RefSeq" id="WP_005766762.1">
    <property type="nucleotide sequence ID" value="NC_008783.1"/>
</dbReference>
<dbReference type="SMR" id="A1USE7"/>
<dbReference type="STRING" id="360095.BARBAKC583_0592"/>
<dbReference type="GeneID" id="4683938"/>
<dbReference type="KEGG" id="bbk:BARBAKC583_0592"/>
<dbReference type="PATRIC" id="fig|360095.6.peg.578"/>
<dbReference type="eggNOG" id="COG1043">
    <property type="taxonomic scope" value="Bacteria"/>
</dbReference>
<dbReference type="HOGENOM" id="CLU_061249_0_0_5"/>
<dbReference type="OrthoDB" id="9807278at2"/>
<dbReference type="UniPathway" id="UPA00359">
    <property type="reaction ID" value="UER00477"/>
</dbReference>
<dbReference type="Proteomes" id="UP000000643">
    <property type="component" value="Chromosome"/>
</dbReference>
<dbReference type="GO" id="GO:0005737">
    <property type="term" value="C:cytoplasm"/>
    <property type="evidence" value="ECO:0007669"/>
    <property type="project" value="UniProtKB-SubCell"/>
</dbReference>
<dbReference type="GO" id="GO:0016020">
    <property type="term" value="C:membrane"/>
    <property type="evidence" value="ECO:0007669"/>
    <property type="project" value="GOC"/>
</dbReference>
<dbReference type="GO" id="GO:0008780">
    <property type="term" value="F:acyl-[acyl-carrier-protein]-UDP-N-acetylglucosamine O-acyltransferase activity"/>
    <property type="evidence" value="ECO:0007669"/>
    <property type="project" value="UniProtKB-UniRule"/>
</dbReference>
<dbReference type="GO" id="GO:0009245">
    <property type="term" value="P:lipid A biosynthetic process"/>
    <property type="evidence" value="ECO:0007669"/>
    <property type="project" value="UniProtKB-UniRule"/>
</dbReference>
<dbReference type="CDD" id="cd03351">
    <property type="entry name" value="LbH_UDP-GlcNAc_AT"/>
    <property type="match status" value="1"/>
</dbReference>
<dbReference type="Gene3D" id="2.160.10.10">
    <property type="entry name" value="Hexapeptide repeat proteins"/>
    <property type="match status" value="1"/>
</dbReference>
<dbReference type="Gene3D" id="1.20.1180.10">
    <property type="entry name" value="Udp N-acetylglucosamine O-acyltransferase, C-terminal domain"/>
    <property type="match status" value="1"/>
</dbReference>
<dbReference type="HAMAP" id="MF_00387">
    <property type="entry name" value="LpxA"/>
    <property type="match status" value="1"/>
</dbReference>
<dbReference type="InterPro" id="IPR029098">
    <property type="entry name" value="Acetyltransf_C"/>
</dbReference>
<dbReference type="InterPro" id="IPR037157">
    <property type="entry name" value="Acetyltransf_C_sf"/>
</dbReference>
<dbReference type="InterPro" id="IPR001451">
    <property type="entry name" value="Hexapep"/>
</dbReference>
<dbReference type="InterPro" id="IPR010137">
    <property type="entry name" value="Lipid_A_LpxA"/>
</dbReference>
<dbReference type="InterPro" id="IPR011004">
    <property type="entry name" value="Trimer_LpxA-like_sf"/>
</dbReference>
<dbReference type="NCBIfam" id="TIGR01852">
    <property type="entry name" value="lipid_A_lpxA"/>
    <property type="match status" value="1"/>
</dbReference>
<dbReference type="NCBIfam" id="NF003657">
    <property type="entry name" value="PRK05289.1"/>
    <property type="match status" value="1"/>
</dbReference>
<dbReference type="PANTHER" id="PTHR43480">
    <property type="entry name" value="ACYL-[ACYL-CARRIER-PROTEIN]--UDP-N-ACETYLGLUCOSAMINE O-ACYLTRANSFERASE"/>
    <property type="match status" value="1"/>
</dbReference>
<dbReference type="PANTHER" id="PTHR43480:SF1">
    <property type="entry name" value="ACYL-[ACYL-CARRIER-PROTEIN]--UDP-N-ACETYLGLUCOSAMINE O-ACYLTRANSFERASE, MITOCHONDRIAL-RELATED"/>
    <property type="match status" value="1"/>
</dbReference>
<dbReference type="Pfam" id="PF13720">
    <property type="entry name" value="Acetyltransf_11"/>
    <property type="match status" value="1"/>
</dbReference>
<dbReference type="Pfam" id="PF00132">
    <property type="entry name" value="Hexapep"/>
    <property type="match status" value="1"/>
</dbReference>
<dbReference type="PIRSF" id="PIRSF000456">
    <property type="entry name" value="UDP-GlcNAc_acltr"/>
    <property type="match status" value="1"/>
</dbReference>
<dbReference type="SUPFAM" id="SSF51161">
    <property type="entry name" value="Trimeric LpxA-like enzymes"/>
    <property type="match status" value="1"/>
</dbReference>
<dbReference type="PROSITE" id="PS00101">
    <property type="entry name" value="HEXAPEP_TRANSFERASES"/>
    <property type="match status" value="1"/>
</dbReference>
<feature type="chain" id="PRO_0000302561" description="Acyl-[acyl-carrier-protein]--UDP-N-acetylglucosamine O-acyltransferase">
    <location>
        <begin position="1"/>
        <end position="274"/>
    </location>
</feature>
<name>LPXA_BARBK</name>
<reference key="1">
    <citation type="submission" date="2006-12" db="EMBL/GenBank/DDBJ databases">
        <authorList>
            <person name="Hendrix L."/>
            <person name="Mohamoud Y."/>
            <person name="Radune D."/>
            <person name="Shvartsbeyn A."/>
            <person name="Daugherty S."/>
            <person name="Dodson R."/>
            <person name="Durkin A.S."/>
            <person name="Harkins D."/>
            <person name="Huot H."/>
            <person name="Kothari S.P."/>
            <person name="Madupu R."/>
            <person name="Li J."/>
            <person name="Nelson W.C."/>
            <person name="Shrivastava S."/>
            <person name="Giglio M.G."/>
            <person name="Haft D."/>
            <person name="Selengut J."/>
            <person name="Fraser-Ligget C."/>
            <person name="Seshadri R."/>
        </authorList>
    </citation>
    <scope>NUCLEOTIDE SEQUENCE [LARGE SCALE GENOMIC DNA]</scope>
    <source>
        <strain>ATCC 35685 / KC583 / Herrer 020/F12,63</strain>
    </source>
</reference>
<organism>
    <name type="scientific">Bartonella bacilliformis (strain ATCC 35685 / KC583 / Herrer 020/F12,63)</name>
    <dbReference type="NCBI Taxonomy" id="360095"/>
    <lineage>
        <taxon>Bacteria</taxon>
        <taxon>Pseudomonadati</taxon>
        <taxon>Pseudomonadota</taxon>
        <taxon>Alphaproteobacteria</taxon>
        <taxon>Hyphomicrobiales</taxon>
        <taxon>Bartonellaceae</taxon>
        <taxon>Bartonella</taxon>
    </lineage>
</organism>
<keyword id="KW-0012">Acyltransferase</keyword>
<keyword id="KW-0963">Cytoplasm</keyword>
<keyword id="KW-0441">Lipid A biosynthesis</keyword>
<keyword id="KW-0444">Lipid biosynthesis</keyword>
<keyword id="KW-0443">Lipid metabolism</keyword>
<keyword id="KW-0677">Repeat</keyword>
<keyword id="KW-0808">Transferase</keyword>